<organism>
    <name type="scientific">Emericella nidulans (strain FGSC A4 / ATCC 38163 / CBS 112.46 / NRRL 194 / M139)</name>
    <name type="common">Aspergillus nidulans</name>
    <dbReference type="NCBI Taxonomy" id="227321"/>
    <lineage>
        <taxon>Eukaryota</taxon>
        <taxon>Fungi</taxon>
        <taxon>Dikarya</taxon>
        <taxon>Ascomycota</taxon>
        <taxon>Pezizomycotina</taxon>
        <taxon>Eurotiomycetes</taxon>
        <taxon>Eurotiomycetidae</taxon>
        <taxon>Eurotiales</taxon>
        <taxon>Aspergillaceae</taxon>
        <taxon>Aspergillus</taxon>
        <taxon>Aspergillus subgen. Nidulantes</taxon>
    </lineage>
</organism>
<sequence>MALLRHLLPVLTVGSAVQSAVLVQDQFQTRCENFAGKIDLPNVKVNFASYIPGSTNLTLDNVPTCDQSQVVSSDICRVAMAVTTSNASEITLEAWFPRDYTGRFLSTGNGGLGGCIQYSDLDYASRLGFATVGANNGHNGTSGEPFYKAPEVLEDFVYRSVHTGIVVGKQLTKLFYDEGFDTSYYLGCSTGGRQGFKLAQDFPGEVDGIIAGAPAINFVGLLSWSAHFYPITGPVGSATYLSLDDWDLVHEEILRQCDGLDGAEDGIIEDPDLCHPNATTLLCSPGATSGSCLTATQVNTVHEVYAPLLSSNSTLIYPRMQPGGEQFAAPAMYNGQPFQYSKDWWRYVVYSDPTWNATKWTIRDAEAALRQNPYNIQTWNADLSPLRDSGSKLLTYHGLQDQLISSDDSKLYYHRLMKTMGVTSNQLDEFYRFFQISGMAHCQDGDGAYGIGNRAETEFSTEPEDNVLMAMVRWVEEGIAPETVRGAKFSDGVGSEVEYYRKHCRYPRRNVYKGPGDYTDETAWECV</sequence>
<keyword id="KW-0106">Calcium</keyword>
<keyword id="KW-0119">Carbohydrate metabolism</keyword>
<keyword id="KW-1015">Disulfide bond</keyword>
<keyword id="KW-0325">Glycoprotein</keyword>
<keyword id="KW-0378">Hydrolase</keyword>
<keyword id="KW-0479">Metal-binding</keyword>
<keyword id="KW-0624">Polysaccharide degradation</keyword>
<keyword id="KW-1185">Reference proteome</keyword>
<keyword id="KW-0964">Secreted</keyword>
<keyword id="KW-0719">Serine esterase</keyword>
<keyword id="KW-0732">Signal</keyword>
<keyword id="KW-0858">Xylan degradation</keyword>
<name>FAEB_EMENI</name>
<gene>
    <name type="primary">faeB</name>
    <name type="ORF">AN1772</name>
</gene>
<accession>Q5BCF8</accession>
<accession>C8VPC9</accession>
<protein>
    <recommendedName>
        <fullName>Probable feruloyl esterase B</fullName>
        <ecNumber evidence="3">3.1.1.73</ecNumber>
    </recommendedName>
    <alternativeName>
        <fullName>Ferulic acid esterase B</fullName>
        <shortName>FAEB</shortName>
    </alternativeName>
</protein>
<reference key="1">
    <citation type="journal article" date="2005" name="Nature">
        <title>Sequencing of Aspergillus nidulans and comparative analysis with A. fumigatus and A. oryzae.</title>
        <authorList>
            <person name="Galagan J.E."/>
            <person name="Calvo S.E."/>
            <person name="Cuomo C."/>
            <person name="Ma L.-J."/>
            <person name="Wortman J.R."/>
            <person name="Batzoglou S."/>
            <person name="Lee S.-I."/>
            <person name="Bastuerkmen M."/>
            <person name="Spevak C.C."/>
            <person name="Clutterbuck J."/>
            <person name="Kapitonov V."/>
            <person name="Jurka J."/>
            <person name="Scazzocchio C."/>
            <person name="Farman M.L."/>
            <person name="Butler J."/>
            <person name="Purcell S."/>
            <person name="Harris S."/>
            <person name="Braus G.H."/>
            <person name="Draht O."/>
            <person name="Busch S."/>
            <person name="D'Enfert C."/>
            <person name="Bouchier C."/>
            <person name="Goldman G.H."/>
            <person name="Bell-Pedersen D."/>
            <person name="Griffiths-Jones S."/>
            <person name="Doonan J.H."/>
            <person name="Yu J."/>
            <person name="Vienken K."/>
            <person name="Pain A."/>
            <person name="Freitag M."/>
            <person name="Selker E.U."/>
            <person name="Archer D.B."/>
            <person name="Penalva M.A."/>
            <person name="Oakley B.R."/>
            <person name="Momany M."/>
            <person name="Tanaka T."/>
            <person name="Kumagai T."/>
            <person name="Asai K."/>
            <person name="Machida M."/>
            <person name="Nierman W.C."/>
            <person name="Denning D.W."/>
            <person name="Caddick M.X."/>
            <person name="Hynes M."/>
            <person name="Paoletti M."/>
            <person name="Fischer R."/>
            <person name="Miller B.L."/>
            <person name="Dyer P.S."/>
            <person name="Sachs M.S."/>
            <person name="Osmani S.A."/>
            <person name="Birren B.W."/>
        </authorList>
    </citation>
    <scope>NUCLEOTIDE SEQUENCE [LARGE SCALE GENOMIC DNA]</scope>
    <source>
        <strain>FGSC A4 / ATCC 38163 / CBS 112.46 / NRRL 194 / M139</strain>
    </source>
</reference>
<reference key="2">
    <citation type="journal article" date="2009" name="Fungal Genet. Biol.">
        <title>The 2008 update of the Aspergillus nidulans genome annotation: a community effort.</title>
        <authorList>
            <person name="Wortman J.R."/>
            <person name="Gilsenan J.M."/>
            <person name="Joardar V."/>
            <person name="Deegan J."/>
            <person name="Clutterbuck J."/>
            <person name="Andersen M.R."/>
            <person name="Archer D."/>
            <person name="Bencina M."/>
            <person name="Braus G."/>
            <person name="Coutinho P."/>
            <person name="von Dohren H."/>
            <person name="Doonan J."/>
            <person name="Driessen A.J."/>
            <person name="Durek P."/>
            <person name="Espeso E."/>
            <person name="Fekete E."/>
            <person name="Flipphi M."/>
            <person name="Estrada C.G."/>
            <person name="Geysens S."/>
            <person name="Goldman G."/>
            <person name="de Groot P.W."/>
            <person name="Hansen K."/>
            <person name="Harris S.D."/>
            <person name="Heinekamp T."/>
            <person name="Helmstaedt K."/>
            <person name="Henrissat B."/>
            <person name="Hofmann G."/>
            <person name="Homan T."/>
            <person name="Horio T."/>
            <person name="Horiuchi H."/>
            <person name="James S."/>
            <person name="Jones M."/>
            <person name="Karaffa L."/>
            <person name="Karanyi Z."/>
            <person name="Kato M."/>
            <person name="Keller N."/>
            <person name="Kelly D.E."/>
            <person name="Kiel J.A."/>
            <person name="Kim J.M."/>
            <person name="van der Klei I.J."/>
            <person name="Klis F.M."/>
            <person name="Kovalchuk A."/>
            <person name="Krasevec N."/>
            <person name="Kubicek C.P."/>
            <person name="Liu B."/>
            <person name="Maccabe A."/>
            <person name="Meyer V."/>
            <person name="Mirabito P."/>
            <person name="Miskei M."/>
            <person name="Mos M."/>
            <person name="Mullins J."/>
            <person name="Nelson D.R."/>
            <person name="Nielsen J."/>
            <person name="Oakley B.R."/>
            <person name="Osmani S.A."/>
            <person name="Pakula T."/>
            <person name="Paszewski A."/>
            <person name="Paulsen I."/>
            <person name="Pilsyk S."/>
            <person name="Pocsi I."/>
            <person name="Punt P.J."/>
            <person name="Ram A.F."/>
            <person name="Ren Q."/>
            <person name="Robellet X."/>
            <person name="Robson G."/>
            <person name="Seiboth B."/>
            <person name="van Solingen P."/>
            <person name="Specht T."/>
            <person name="Sun J."/>
            <person name="Taheri-Talesh N."/>
            <person name="Takeshita N."/>
            <person name="Ussery D."/>
            <person name="vanKuyk P.A."/>
            <person name="Visser H."/>
            <person name="van de Vondervoort P.J."/>
            <person name="de Vries R.P."/>
            <person name="Walton J."/>
            <person name="Xiang X."/>
            <person name="Xiong Y."/>
            <person name="Zeng A.P."/>
            <person name="Brandt B.W."/>
            <person name="Cornell M.J."/>
            <person name="van den Hondel C.A."/>
            <person name="Visser J."/>
            <person name="Oliver S.G."/>
            <person name="Turner G."/>
        </authorList>
    </citation>
    <scope>GENOME REANNOTATION</scope>
    <source>
        <strain>FGSC A4 / ATCC 38163 / CBS 112.46 / NRRL 194 / M139</strain>
    </source>
</reference>
<evidence type="ECO:0000250" key="1"/>
<evidence type="ECO:0000250" key="2">
    <source>
        <dbReference type="UniProtKB" id="Q2UP89"/>
    </source>
</evidence>
<evidence type="ECO:0000250" key="3">
    <source>
        <dbReference type="UniProtKB" id="Q8WZI8"/>
    </source>
</evidence>
<evidence type="ECO:0000255" key="4"/>
<evidence type="ECO:0000305" key="5"/>
<comment type="function">
    <text evidence="3">Involved in degradation of plant cell walls. Hydrolyzes the feruloyl-arabinose ester bond in arabinoxylans as well as the feruloyl-galactose and feruloyl-arabinose ester bonds in pectin.</text>
</comment>
<comment type="catalytic activity">
    <reaction evidence="3">
        <text>feruloyl-polysaccharide + H2O = ferulate + polysaccharide.</text>
        <dbReference type="EC" id="3.1.1.73"/>
    </reaction>
</comment>
<comment type="subcellular location">
    <subcellularLocation>
        <location evidence="1">Secreted</location>
    </subcellularLocation>
</comment>
<comment type="similarity">
    <text evidence="5">Belongs to the tannase family.</text>
</comment>
<proteinExistence type="inferred from homology"/>
<feature type="signal peptide" evidence="4">
    <location>
        <begin position="1"/>
        <end position="19"/>
    </location>
</feature>
<feature type="chain" id="PRO_0000394934" description="Probable feruloyl esterase B">
    <location>
        <begin position="20"/>
        <end position="527"/>
    </location>
</feature>
<feature type="active site" description="Acyl-ester intermediate" evidence="2">
    <location>
        <position position="189"/>
    </location>
</feature>
<feature type="active site" description="Charge relay system" evidence="2">
    <location>
        <position position="401"/>
    </location>
</feature>
<feature type="active site" description="Charge relay system" evidence="2">
    <location>
        <position position="441"/>
    </location>
</feature>
<feature type="binding site" evidence="2">
    <location>
        <position position="258"/>
    </location>
    <ligand>
        <name>Ca(2+)</name>
        <dbReference type="ChEBI" id="CHEBI:29108"/>
    </ligand>
</feature>
<feature type="binding site" evidence="2">
    <location>
        <position position="261"/>
    </location>
    <ligand>
        <name>Ca(2+)</name>
        <dbReference type="ChEBI" id="CHEBI:29108"/>
    </ligand>
</feature>
<feature type="binding site" evidence="2">
    <location>
        <position position="263"/>
    </location>
    <ligand>
        <name>Ca(2+)</name>
        <dbReference type="ChEBI" id="CHEBI:29108"/>
    </ligand>
</feature>
<feature type="binding site" evidence="2">
    <location>
        <position position="265"/>
    </location>
    <ligand>
        <name>Ca(2+)</name>
        <dbReference type="ChEBI" id="CHEBI:29108"/>
    </ligand>
</feature>
<feature type="binding site" evidence="2">
    <location>
        <position position="267"/>
    </location>
    <ligand>
        <name>Ca(2+)</name>
        <dbReference type="ChEBI" id="CHEBI:29108"/>
    </ligand>
</feature>
<feature type="glycosylation site" description="N-linked (GlcNAc...) asparagine" evidence="4">
    <location>
        <position position="56"/>
    </location>
</feature>
<feature type="glycosylation site" description="N-linked (GlcNAc...) asparagine" evidence="4">
    <location>
        <position position="86"/>
    </location>
</feature>
<feature type="glycosylation site" description="N-linked (GlcNAc...) asparagine" evidence="4">
    <location>
        <position position="139"/>
    </location>
</feature>
<feature type="glycosylation site" description="N-linked (GlcNAc...) asparagine" evidence="4">
    <location>
        <position position="277"/>
    </location>
</feature>
<feature type="glycosylation site" description="N-linked (GlcNAc...) asparagine" evidence="4">
    <location>
        <position position="312"/>
    </location>
</feature>
<feature type="glycosylation site" description="N-linked (GlcNAc...) asparagine" evidence="4">
    <location>
        <position position="356"/>
    </location>
</feature>
<feature type="disulfide bond" evidence="2">
    <location>
        <begin position="31"/>
        <end position="76"/>
    </location>
</feature>
<feature type="disulfide bond" evidence="2">
    <location>
        <begin position="65"/>
        <end position="115"/>
    </location>
</feature>
<feature type="disulfide bond" evidence="2">
    <location>
        <begin position="188"/>
        <end position="442"/>
    </location>
</feature>
<feature type="disulfide bond" evidence="2">
    <location>
        <begin position="257"/>
        <end position="274"/>
    </location>
</feature>
<feature type="disulfide bond" evidence="2">
    <location>
        <begin position="283"/>
        <end position="292"/>
    </location>
</feature>
<feature type="disulfide bond" evidence="2">
    <location>
        <begin position="504"/>
        <end position="526"/>
    </location>
</feature>
<dbReference type="EC" id="3.1.1.73" evidence="3"/>
<dbReference type="EMBL" id="AACD01000028">
    <property type="protein sequence ID" value="EAA63948.1"/>
    <property type="molecule type" value="Genomic_DNA"/>
</dbReference>
<dbReference type="EMBL" id="BN001307">
    <property type="protein sequence ID" value="CBF85532.1"/>
    <property type="molecule type" value="Genomic_DNA"/>
</dbReference>
<dbReference type="RefSeq" id="XP_659376.1">
    <property type="nucleotide sequence ID" value="XM_654284.1"/>
</dbReference>
<dbReference type="SMR" id="Q5BCF8"/>
<dbReference type="STRING" id="227321.Q5BCF8"/>
<dbReference type="ESTHER" id="emeni-q5bcf8">
    <property type="family name" value="Tannase"/>
</dbReference>
<dbReference type="GlyCosmos" id="Q5BCF8">
    <property type="glycosylation" value="6 sites, No reported glycans"/>
</dbReference>
<dbReference type="EnsemblFungi" id="CBF85532">
    <property type="protein sequence ID" value="CBF85532"/>
    <property type="gene ID" value="ANIA_01772"/>
</dbReference>
<dbReference type="KEGG" id="ani:ANIA_01772"/>
<dbReference type="VEuPathDB" id="FungiDB:AN1772"/>
<dbReference type="eggNOG" id="ENOG502QPXZ">
    <property type="taxonomic scope" value="Eukaryota"/>
</dbReference>
<dbReference type="HOGENOM" id="CLU_014819_1_0_1"/>
<dbReference type="InParanoid" id="Q5BCF8"/>
<dbReference type="OMA" id="AWFPREY"/>
<dbReference type="OrthoDB" id="3039123at2759"/>
<dbReference type="BRENDA" id="3.1.1.73">
    <property type="organism ID" value="517"/>
</dbReference>
<dbReference type="Proteomes" id="UP000000560">
    <property type="component" value="Chromosome VII"/>
</dbReference>
<dbReference type="GO" id="GO:0005576">
    <property type="term" value="C:extracellular region"/>
    <property type="evidence" value="ECO:0007669"/>
    <property type="project" value="UniProtKB-SubCell"/>
</dbReference>
<dbReference type="GO" id="GO:0052689">
    <property type="term" value="F:carboxylic ester hydrolase activity"/>
    <property type="evidence" value="ECO:0000318"/>
    <property type="project" value="GO_Central"/>
</dbReference>
<dbReference type="GO" id="GO:0030600">
    <property type="term" value="F:feruloyl esterase activity"/>
    <property type="evidence" value="ECO:0000314"/>
    <property type="project" value="AspGD"/>
</dbReference>
<dbReference type="GO" id="GO:0046872">
    <property type="term" value="F:metal ion binding"/>
    <property type="evidence" value="ECO:0007669"/>
    <property type="project" value="UniProtKB-KW"/>
</dbReference>
<dbReference type="GO" id="GO:0045493">
    <property type="term" value="P:xylan catabolic process"/>
    <property type="evidence" value="ECO:0007669"/>
    <property type="project" value="UniProtKB-KW"/>
</dbReference>
<dbReference type="Gene3D" id="3.40.50.1820">
    <property type="entry name" value="alpha/beta hydrolase"/>
    <property type="match status" value="1"/>
</dbReference>
<dbReference type="InterPro" id="IPR029058">
    <property type="entry name" value="AB_hydrolase_fold"/>
</dbReference>
<dbReference type="InterPro" id="IPR011118">
    <property type="entry name" value="Tannase/feruloyl_esterase"/>
</dbReference>
<dbReference type="PANTHER" id="PTHR33938">
    <property type="entry name" value="FERULOYL ESTERASE B-RELATED"/>
    <property type="match status" value="1"/>
</dbReference>
<dbReference type="PANTHER" id="PTHR33938:SF15">
    <property type="entry name" value="FERULOYL ESTERASE B-RELATED"/>
    <property type="match status" value="1"/>
</dbReference>
<dbReference type="Pfam" id="PF07519">
    <property type="entry name" value="Tannase"/>
    <property type="match status" value="1"/>
</dbReference>
<dbReference type="SUPFAM" id="SSF53474">
    <property type="entry name" value="alpha/beta-Hydrolases"/>
    <property type="match status" value="1"/>
</dbReference>